<sequence length="293" mass="32783">MIDLTIKCKEKVPSRAFVVGYPIHHSKSPKIHNFWLKQYGLQGEYLAQEVKLEEFSDFLTSTKKRGFCGGNVTLPYKQEAFRLANYKDEVATMIGAANTLWYEGDKLCATNSDAYGFSANLDDSAPNWVGETALIFGAGGAARAILYALKKRGFERICLLNRTRQRADNLAEHFGKPVEVHDWHNVGEILYEADLIVNTTSVGMTDPHGWKTGSLFCDFQKTKTTTLVTDIVYTPLTTPFLQQAKAHGLRTVDGLGMLLHQAVPGFERWFGITPQVTKALRTKILEDMGEERG</sequence>
<protein>
    <recommendedName>
        <fullName evidence="1">Shikimate dehydrogenase (NADP(+))</fullName>
        <shortName evidence="1">SDH</shortName>
        <ecNumber evidence="1">1.1.1.25</ecNumber>
    </recommendedName>
</protein>
<evidence type="ECO:0000255" key="1">
    <source>
        <dbReference type="HAMAP-Rule" id="MF_00222"/>
    </source>
</evidence>
<accession>Q6G1B5</accession>
<dbReference type="EC" id="1.1.1.25" evidence="1"/>
<dbReference type="EMBL" id="BX897700">
    <property type="protein sequence ID" value="CAF25510.1"/>
    <property type="molecule type" value="Genomic_DNA"/>
</dbReference>
<dbReference type="RefSeq" id="WP_011178842.1">
    <property type="nucleotide sequence ID" value="NC_005955.1"/>
</dbReference>
<dbReference type="SMR" id="Q6G1B5"/>
<dbReference type="KEGG" id="bqu:BQ00030"/>
<dbReference type="eggNOG" id="COG0169">
    <property type="taxonomic scope" value="Bacteria"/>
</dbReference>
<dbReference type="HOGENOM" id="CLU_044063_2_0_5"/>
<dbReference type="OrthoDB" id="9792692at2"/>
<dbReference type="UniPathway" id="UPA00053">
    <property type="reaction ID" value="UER00087"/>
</dbReference>
<dbReference type="Proteomes" id="UP000000597">
    <property type="component" value="Chromosome"/>
</dbReference>
<dbReference type="GO" id="GO:0005829">
    <property type="term" value="C:cytosol"/>
    <property type="evidence" value="ECO:0007669"/>
    <property type="project" value="TreeGrafter"/>
</dbReference>
<dbReference type="GO" id="GO:0050661">
    <property type="term" value="F:NADP binding"/>
    <property type="evidence" value="ECO:0007669"/>
    <property type="project" value="InterPro"/>
</dbReference>
<dbReference type="GO" id="GO:0004764">
    <property type="term" value="F:shikimate 3-dehydrogenase (NADP+) activity"/>
    <property type="evidence" value="ECO:0007669"/>
    <property type="project" value="UniProtKB-UniRule"/>
</dbReference>
<dbReference type="GO" id="GO:0008652">
    <property type="term" value="P:amino acid biosynthetic process"/>
    <property type="evidence" value="ECO:0007669"/>
    <property type="project" value="UniProtKB-KW"/>
</dbReference>
<dbReference type="GO" id="GO:0009073">
    <property type="term" value="P:aromatic amino acid family biosynthetic process"/>
    <property type="evidence" value="ECO:0007669"/>
    <property type="project" value="UniProtKB-KW"/>
</dbReference>
<dbReference type="GO" id="GO:0009423">
    <property type="term" value="P:chorismate biosynthetic process"/>
    <property type="evidence" value="ECO:0007669"/>
    <property type="project" value="UniProtKB-UniRule"/>
</dbReference>
<dbReference type="GO" id="GO:0019632">
    <property type="term" value="P:shikimate metabolic process"/>
    <property type="evidence" value="ECO:0007669"/>
    <property type="project" value="InterPro"/>
</dbReference>
<dbReference type="CDD" id="cd01065">
    <property type="entry name" value="NAD_bind_Shikimate_DH"/>
    <property type="match status" value="1"/>
</dbReference>
<dbReference type="Gene3D" id="3.40.50.10860">
    <property type="entry name" value="Leucine Dehydrogenase, chain A, domain 1"/>
    <property type="match status" value="1"/>
</dbReference>
<dbReference type="Gene3D" id="3.40.50.720">
    <property type="entry name" value="NAD(P)-binding Rossmann-like Domain"/>
    <property type="match status" value="1"/>
</dbReference>
<dbReference type="HAMAP" id="MF_00222">
    <property type="entry name" value="Shikimate_DH_AroE"/>
    <property type="match status" value="1"/>
</dbReference>
<dbReference type="InterPro" id="IPR046346">
    <property type="entry name" value="Aminoacid_DH-like_N_sf"/>
</dbReference>
<dbReference type="InterPro" id="IPR036291">
    <property type="entry name" value="NAD(P)-bd_dom_sf"/>
</dbReference>
<dbReference type="InterPro" id="IPR041121">
    <property type="entry name" value="SDH_C"/>
</dbReference>
<dbReference type="InterPro" id="IPR011342">
    <property type="entry name" value="Shikimate_DH"/>
</dbReference>
<dbReference type="InterPro" id="IPR013708">
    <property type="entry name" value="Shikimate_DH-bd_N"/>
</dbReference>
<dbReference type="InterPro" id="IPR022893">
    <property type="entry name" value="Shikimate_DH_fam"/>
</dbReference>
<dbReference type="InterPro" id="IPR006151">
    <property type="entry name" value="Shikm_DH/Glu-tRNA_Rdtase"/>
</dbReference>
<dbReference type="NCBIfam" id="TIGR00507">
    <property type="entry name" value="aroE"/>
    <property type="match status" value="1"/>
</dbReference>
<dbReference type="NCBIfam" id="NF001312">
    <property type="entry name" value="PRK00258.1-4"/>
    <property type="match status" value="1"/>
</dbReference>
<dbReference type="PANTHER" id="PTHR21089:SF1">
    <property type="entry name" value="BIFUNCTIONAL 3-DEHYDROQUINATE DEHYDRATASE_SHIKIMATE DEHYDROGENASE, CHLOROPLASTIC"/>
    <property type="match status" value="1"/>
</dbReference>
<dbReference type="PANTHER" id="PTHR21089">
    <property type="entry name" value="SHIKIMATE DEHYDROGENASE"/>
    <property type="match status" value="1"/>
</dbReference>
<dbReference type="Pfam" id="PF18317">
    <property type="entry name" value="SDH_C"/>
    <property type="match status" value="1"/>
</dbReference>
<dbReference type="Pfam" id="PF01488">
    <property type="entry name" value="Shikimate_DH"/>
    <property type="match status" value="1"/>
</dbReference>
<dbReference type="Pfam" id="PF08501">
    <property type="entry name" value="Shikimate_dh_N"/>
    <property type="match status" value="1"/>
</dbReference>
<dbReference type="SUPFAM" id="SSF53223">
    <property type="entry name" value="Aminoacid dehydrogenase-like, N-terminal domain"/>
    <property type="match status" value="1"/>
</dbReference>
<dbReference type="SUPFAM" id="SSF51735">
    <property type="entry name" value="NAD(P)-binding Rossmann-fold domains"/>
    <property type="match status" value="1"/>
</dbReference>
<organism>
    <name type="scientific">Bartonella quintana (strain Toulouse)</name>
    <name type="common">Rochalimaea quintana</name>
    <dbReference type="NCBI Taxonomy" id="283165"/>
    <lineage>
        <taxon>Bacteria</taxon>
        <taxon>Pseudomonadati</taxon>
        <taxon>Pseudomonadota</taxon>
        <taxon>Alphaproteobacteria</taxon>
        <taxon>Hyphomicrobiales</taxon>
        <taxon>Bartonellaceae</taxon>
        <taxon>Bartonella</taxon>
    </lineage>
</organism>
<reference key="1">
    <citation type="journal article" date="2004" name="Proc. Natl. Acad. Sci. U.S.A.">
        <title>The louse-borne human pathogen Bartonella quintana is a genomic derivative of the zoonotic agent Bartonella henselae.</title>
        <authorList>
            <person name="Alsmark U.C.M."/>
            <person name="Frank A.C."/>
            <person name="Karlberg E.O."/>
            <person name="Legault B.-A."/>
            <person name="Ardell D.H."/>
            <person name="Canbaeck B."/>
            <person name="Eriksson A.-S."/>
            <person name="Naeslund A.K."/>
            <person name="Handley S.A."/>
            <person name="Huvet M."/>
            <person name="La Scola B."/>
            <person name="Holmberg M."/>
            <person name="Andersson S.G.E."/>
        </authorList>
    </citation>
    <scope>NUCLEOTIDE SEQUENCE [LARGE SCALE GENOMIC DNA]</scope>
    <source>
        <strain>Toulouse</strain>
    </source>
</reference>
<proteinExistence type="inferred from homology"/>
<name>AROE_BARQU</name>
<keyword id="KW-0028">Amino-acid biosynthesis</keyword>
<keyword id="KW-0057">Aromatic amino acid biosynthesis</keyword>
<keyword id="KW-0521">NADP</keyword>
<keyword id="KW-0560">Oxidoreductase</keyword>
<gene>
    <name evidence="1" type="primary">aroE</name>
    <name type="ordered locus">BQ00030</name>
</gene>
<feature type="chain" id="PRO_0000325104" description="Shikimate dehydrogenase (NADP(+))">
    <location>
        <begin position="1"/>
        <end position="293"/>
    </location>
</feature>
<feature type="active site" description="Proton acceptor" evidence="1">
    <location>
        <position position="77"/>
    </location>
</feature>
<feature type="binding site" evidence="1">
    <location>
        <begin position="26"/>
        <end position="28"/>
    </location>
    <ligand>
        <name>shikimate</name>
        <dbReference type="ChEBI" id="CHEBI:36208"/>
    </ligand>
</feature>
<feature type="binding site" evidence="1">
    <location>
        <position position="73"/>
    </location>
    <ligand>
        <name>shikimate</name>
        <dbReference type="ChEBI" id="CHEBI:36208"/>
    </ligand>
</feature>
<feature type="binding site" evidence="1">
    <location>
        <position position="89"/>
    </location>
    <ligand>
        <name>NADP(+)</name>
        <dbReference type="ChEBI" id="CHEBI:58349"/>
    </ligand>
</feature>
<feature type="binding site" evidence="1">
    <location>
        <position position="98"/>
    </location>
    <ligand>
        <name>shikimate</name>
        <dbReference type="ChEBI" id="CHEBI:36208"/>
    </ligand>
</feature>
<feature type="binding site" evidence="1">
    <location>
        <position position="113"/>
    </location>
    <ligand>
        <name>shikimate</name>
        <dbReference type="ChEBI" id="CHEBI:36208"/>
    </ligand>
</feature>
<feature type="binding site" evidence="1">
    <location>
        <begin position="137"/>
        <end position="141"/>
    </location>
    <ligand>
        <name>NADP(+)</name>
        <dbReference type="ChEBI" id="CHEBI:58349"/>
    </ligand>
</feature>
<feature type="binding site" evidence="1">
    <location>
        <begin position="161"/>
        <end position="166"/>
    </location>
    <ligand>
        <name>NADP(+)</name>
        <dbReference type="ChEBI" id="CHEBI:58349"/>
    </ligand>
</feature>
<feature type="binding site" evidence="1">
    <location>
        <position position="231"/>
    </location>
    <ligand>
        <name>NADP(+)</name>
        <dbReference type="ChEBI" id="CHEBI:58349"/>
    </ligand>
</feature>
<feature type="binding site" evidence="1">
    <location>
        <position position="233"/>
    </location>
    <ligand>
        <name>shikimate</name>
        <dbReference type="ChEBI" id="CHEBI:36208"/>
    </ligand>
</feature>
<feature type="binding site" evidence="1">
    <location>
        <position position="254"/>
    </location>
    <ligand>
        <name>NADP(+)</name>
        <dbReference type="ChEBI" id="CHEBI:58349"/>
    </ligand>
</feature>
<comment type="function">
    <text evidence="1">Involved in the biosynthesis of the chorismate, which leads to the biosynthesis of aromatic amino acids. Catalyzes the reversible NADPH linked reduction of 3-dehydroshikimate (DHSA) to yield shikimate (SA).</text>
</comment>
<comment type="catalytic activity">
    <reaction evidence="1">
        <text>shikimate + NADP(+) = 3-dehydroshikimate + NADPH + H(+)</text>
        <dbReference type="Rhea" id="RHEA:17737"/>
        <dbReference type="ChEBI" id="CHEBI:15378"/>
        <dbReference type="ChEBI" id="CHEBI:16630"/>
        <dbReference type="ChEBI" id="CHEBI:36208"/>
        <dbReference type="ChEBI" id="CHEBI:57783"/>
        <dbReference type="ChEBI" id="CHEBI:58349"/>
        <dbReference type="EC" id="1.1.1.25"/>
    </reaction>
</comment>
<comment type="pathway">
    <text evidence="1">Metabolic intermediate biosynthesis; chorismate biosynthesis; chorismate from D-erythrose 4-phosphate and phosphoenolpyruvate: step 4/7.</text>
</comment>
<comment type="subunit">
    <text evidence="1">Homodimer.</text>
</comment>
<comment type="similarity">
    <text evidence="1">Belongs to the shikimate dehydrogenase family.</text>
</comment>